<keyword id="KW-0046">Antibiotic resistance</keyword>
<keyword id="KW-0378">Hydrolase</keyword>
<keyword id="KW-0732">Signal</keyword>
<comment type="catalytic activity">
    <reaction>
        <text>a beta-lactam + H2O = a substituted beta-amino acid</text>
        <dbReference type="Rhea" id="RHEA:20401"/>
        <dbReference type="ChEBI" id="CHEBI:15377"/>
        <dbReference type="ChEBI" id="CHEBI:35627"/>
        <dbReference type="ChEBI" id="CHEBI:140347"/>
        <dbReference type="EC" id="3.5.2.6"/>
    </reaction>
</comment>
<comment type="PTM">
    <text>Predicted to be exported by the Tat system. The position of the signal peptide cleavage has not been experimentally proven.</text>
</comment>
<comment type="miscellaneous">
    <text evidence="4">The class A beta-lactamase family has a specific amino-acid numbering system, sometimes called Ambler or ABL numbering and often misspelt as Amber. A multiple sequence alignment was used to derive a consensus sequence and then the consensus was numbered taking into account insertions and deletions. This allows use of identical numbers, e.g. for active site residues, despite differences in protein length. UniProt always uses natural numbering of residues, hence there appear to be differences in numbering between this entry and some papers.</text>
</comment>
<comment type="similarity">
    <text evidence="3">Belongs to the class-A beta-lactamase family.</text>
</comment>
<evidence type="ECO:0000250" key="1"/>
<evidence type="ECO:0000255" key="2">
    <source>
        <dbReference type="PROSITE-ProRule" id="PRU00648"/>
    </source>
</evidence>
<evidence type="ECO:0000305" key="3"/>
<evidence type="ECO:0000305" key="4">
    <source>
    </source>
</evidence>
<accession>P35392</accession>
<accession>P72435</accession>
<proteinExistence type="inferred from homology"/>
<dbReference type="EC" id="3.5.2.6"/>
<dbReference type="EMBL" id="M34179">
    <property type="protein sequence ID" value="AAA26709.1"/>
    <property type="molecule type" value="Genomic_DNA"/>
</dbReference>
<dbReference type="EMBL" id="M94255">
    <property type="protein sequence ID" value="AAC41397.1"/>
    <property type="molecule type" value="Genomic_DNA"/>
</dbReference>
<dbReference type="PIR" id="B45822">
    <property type="entry name" value="B45822"/>
</dbReference>
<dbReference type="RefSeq" id="WP_031135798.1">
    <property type="nucleotide sequence ID" value="NZ_CP072209.1"/>
</dbReference>
<dbReference type="SMR" id="P35392"/>
<dbReference type="GO" id="GO:0008800">
    <property type="term" value="F:beta-lactamase activity"/>
    <property type="evidence" value="ECO:0007669"/>
    <property type="project" value="UniProtKB-EC"/>
</dbReference>
<dbReference type="GO" id="GO:0030655">
    <property type="term" value="P:beta-lactam antibiotic catabolic process"/>
    <property type="evidence" value="ECO:0007669"/>
    <property type="project" value="InterPro"/>
</dbReference>
<dbReference type="GO" id="GO:0046677">
    <property type="term" value="P:response to antibiotic"/>
    <property type="evidence" value="ECO:0007669"/>
    <property type="project" value="UniProtKB-KW"/>
</dbReference>
<dbReference type="Gene3D" id="3.40.710.10">
    <property type="entry name" value="DD-peptidase/beta-lactamase superfamily"/>
    <property type="match status" value="1"/>
</dbReference>
<dbReference type="InterPro" id="IPR012338">
    <property type="entry name" value="Beta-lactam/transpept-like"/>
</dbReference>
<dbReference type="InterPro" id="IPR045155">
    <property type="entry name" value="Beta-lactam_cat"/>
</dbReference>
<dbReference type="InterPro" id="IPR000871">
    <property type="entry name" value="Beta-lactam_class-A"/>
</dbReference>
<dbReference type="InterPro" id="IPR006311">
    <property type="entry name" value="TAT_signal"/>
</dbReference>
<dbReference type="NCBIfam" id="NF033103">
    <property type="entry name" value="bla_class_A"/>
    <property type="match status" value="1"/>
</dbReference>
<dbReference type="PANTHER" id="PTHR35333">
    <property type="entry name" value="BETA-LACTAMASE"/>
    <property type="match status" value="1"/>
</dbReference>
<dbReference type="PANTHER" id="PTHR35333:SF3">
    <property type="entry name" value="BETA-LACTAMASE-TYPE TRANSPEPTIDASE FOLD CONTAINING PROTEIN"/>
    <property type="match status" value="1"/>
</dbReference>
<dbReference type="Pfam" id="PF13354">
    <property type="entry name" value="Beta-lactamase2"/>
    <property type="match status" value="1"/>
</dbReference>
<dbReference type="PRINTS" id="PR00118">
    <property type="entry name" value="BLACTAMASEA"/>
</dbReference>
<dbReference type="SUPFAM" id="SSF56601">
    <property type="entry name" value="beta-lactamase/transpeptidase-like"/>
    <property type="match status" value="1"/>
</dbReference>
<dbReference type="PROSITE" id="PS51318">
    <property type="entry name" value="TAT"/>
    <property type="match status" value="1"/>
</dbReference>
<feature type="signal peptide" description="Tat-type signal" evidence="2">
    <location>
        <begin position="1"/>
        <end position="34"/>
    </location>
</feature>
<feature type="chain" id="PRO_0000017018" description="Beta-lactamase">
    <location>
        <begin position="35"/>
        <end position="306"/>
    </location>
</feature>
<feature type="active site" description="Acyl-ester intermediate" evidence="1">
    <location>
        <position position="82"/>
    </location>
</feature>
<feature type="binding site" evidence="1">
    <location>
        <begin position="250"/>
        <end position="252"/>
    </location>
    <ligand>
        <name>substrate</name>
    </ligand>
</feature>
<gene>
    <name type="primary">blaF</name>
</gene>
<name>BLAC_STRFR</name>
<protein>
    <recommendedName>
        <fullName>Beta-lactamase</fullName>
        <ecNumber>3.5.2.6</ecNumber>
    </recommendedName>
    <alternativeName>
        <fullName>Penicillinase</fullName>
    </alternativeName>
</protein>
<sequence>MDRTTARPNRRAVLATGVGAALAATAAAAGPAHAAPGRGARVEGRLRALERTHDARLGAFAYDTGTGRTVAYRADERFPIASMFKTIAVAAVLRDLDRDGEVLARRVHYTADYVKRSGYSPVTGLPENVANGMTVAELCEATLTRSDNTAANLLLRDLGGPTAVTRFCRSVGDHVTRLDRWEPELNSAEPGRVTDTTSPRAIGRTYGRLILGDLLAAHDRERLTRWMLDNRTSDERFRKGLPADWLLADKTGGGDYGTNNDAGVAWPPGRPPVVLAVQTTRFTPDAEADNVLVAEAARLLAEAMTD</sequence>
<reference key="1">
    <citation type="journal article" date="1990" name="J. Gen. Microbiol.">
        <title>Molecular analysis of beta-lactamases from four species of Streptomyces: comparison of amino acid sequences with those of other beta-lactamases.</title>
        <authorList>
            <person name="Forsman M."/>
            <person name="Haeggstroem B."/>
            <person name="Lindgren L."/>
            <person name="Jaurin B."/>
        </authorList>
    </citation>
    <scope>NUCLEOTIDE SEQUENCE [GENOMIC DNA]</scope>
    <source>
        <strain>ATCC 10745 / CBS 498.68 / DSM 40063 / JCM 4133 / NBRC 12773 / NCIMB 8233 / NRRL B-1195 / VKM Ac-150</strain>
    </source>
</reference>
<reference key="2">
    <citation type="journal article" date="1992" name="Gene">
        <title>Mutagenic analysis of the promoter of the Streptomyces fradiae beta-lactamase-encoding gene.</title>
        <authorList>
            <person name="Forsman M."/>
            <person name="Granstroem M."/>
        </authorList>
    </citation>
    <scope>NUCLEOTIDE SEQUENCE [GENOMIC DNA] OF 1-40</scope>
</reference>
<reference key="3">
    <citation type="journal article" date="1991" name="Biochem. J.">
        <title>A standard numbering scheme for the class A beta-lactamases.</title>
        <authorList>
            <person name="Ambler R.P."/>
            <person name="Coulson A.F."/>
            <person name="Frere J.M."/>
            <person name="Ghuysen J.M."/>
            <person name="Joris B."/>
            <person name="Forsman M."/>
            <person name="Levesque R.C."/>
            <person name="Tiraby G."/>
            <person name="Waley S.G."/>
        </authorList>
    </citation>
    <scope>AMINO ACID NUMBERING SCHEME</scope>
</reference>
<organism>
    <name type="scientific">Streptomyces fradiae</name>
    <name type="common">Streptomyces roseoflavus</name>
    <dbReference type="NCBI Taxonomy" id="1906"/>
    <lineage>
        <taxon>Bacteria</taxon>
        <taxon>Bacillati</taxon>
        <taxon>Actinomycetota</taxon>
        <taxon>Actinomycetes</taxon>
        <taxon>Kitasatosporales</taxon>
        <taxon>Streptomycetaceae</taxon>
        <taxon>Streptomyces</taxon>
    </lineage>
</organism>